<dbReference type="EC" id="2.3.2.27" evidence="7 11"/>
<dbReference type="EMBL" id="AF061555">
    <property type="protein sequence ID" value="AAC40165.1"/>
    <property type="molecule type" value="mRNA"/>
</dbReference>
<dbReference type="EMBL" id="AH006182">
    <property type="protein sequence ID" value="AAC23678.1"/>
    <property type="molecule type" value="Genomic_DNA"/>
</dbReference>
<dbReference type="EMBL" id="AL844548">
    <property type="status" value="NOT_ANNOTATED_CDS"/>
    <property type="molecule type" value="Genomic_DNA"/>
</dbReference>
<dbReference type="EMBL" id="AL935168">
    <property type="status" value="NOT_ANNOTATED_CDS"/>
    <property type="molecule type" value="Genomic_DNA"/>
</dbReference>
<dbReference type="EMBL" id="AK078173">
    <property type="protein sequence ID" value="BAC37160.1"/>
    <property type="molecule type" value="mRNA"/>
</dbReference>
<dbReference type="EMBL" id="AK089616">
    <property type="protein sequence ID" value="BAC40933.1"/>
    <property type="molecule type" value="mRNA"/>
</dbReference>
<dbReference type="EMBL" id="BC090969">
    <property type="protein sequence ID" value="AAH90969.1"/>
    <property type="status" value="ALT_SEQ"/>
    <property type="molecule type" value="mRNA"/>
</dbReference>
<dbReference type="CCDS" id="CCDS16628.1"/>
<dbReference type="PIR" id="T14318">
    <property type="entry name" value="T14318"/>
</dbReference>
<dbReference type="RefSeq" id="NP_033487.2">
    <property type="nucleotide sequence ID" value="NM_009461.3"/>
</dbReference>
<dbReference type="SMR" id="O70481"/>
<dbReference type="BioGRID" id="204422">
    <property type="interactions" value="11"/>
</dbReference>
<dbReference type="ELM" id="O70481"/>
<dbReference type="FunCoup" id="O70481">
    <property type="interactions" value="2037"/>
</dbReference>
<dbReference type="IntAct" id="O70481">
    <property type="interactions" value="2"/>
</dbReference>
<dbReference type="STRING" id="10090.ENSMUSP00000028728"/>
<dbReference type="GlyGen" id="O70481">
    <property type="glycosylation" value="1 site, 1 N-linked glycan (1 site)"/>
</dbReference>
<dbReference type="iPTMnet" id="O70481"/>
<dbReference type="PhosphoSitePlus" id="O70481"/>
<dbReference type="SwissPalm" id="O70481"/>
<dbReference type="PaxDb" id="10090-ENSMUSP00000028728"/>
<dbReference type="PeptideAtlas" id="O70481"/>
<dbReference type="ProteomicsDB" id="297797"/>
<dbReference type="Pumba" id="O70481"/>
<dbReference type="Antibodypedia" id="23750">
    <property type="antibodies" value="210 antibodies from 28 providers"/>
</dbReference>
<dbReference type="DNASU" id="22222"/>
<dbReference type="Ensembl" id="ENSMUST00000028728.6">
    <property type="protein sequence ID" value="ENSMUSP00000028728.6"/>
    <property type="gene ID" value="ENSMUSG00000027272.6"/>
</dbReference>
<dbReference type="GeneID" id="22222"/>
<dbReference type="KEGG" id="mmu:22222"/>
<dbReference type="UCSC" id="uc008lxb.1">
    <property type="organism name" value="mouse"/>
</dbReference>
<dbReference type="AGR" id="MGI:1277977"/>
<dbReference type="CTD" id="197131"/>
<dbReference type="MGI" id="MGI:1277977">
    <property type="gene designation" value="Ubr1"/>
</dbReference>
<dbReference type="VEuPathDB" id="HostDB:ENSMUSG00000027272"/>
<dbReference type="eggNOG" id="KOG1140">
    <property type="taxonomic scope" value="Eukaryota"/>
</dbReference>
<dbReference type="GeneTree" id="ENSGT00950000183075"/>
<dbReference type="HOGENOM" id="CLU_001801_2_0_1"/>
<dbReference type="InParanoid" id="O70481"/>
<dbReference type="OMA" id="GWYLWAS"/>
<dbReference type="OrthoDB" id="26387at2759"/>
<dbReference type="PhylomeDB" id="O70481"/>
<dbReference type="TreeFam" id="TF323875"/>
<dbReference type="Reactome" id="R-MMU-983168">
    <property type="pathway name" value="Antigen processing: Ubiquitination &amp; Proteasome degradation"/>
</dbReference>
<dbReference type="UniPathway" id="UPA00143"/>
<dbReference type="BioGRID-ORCS" id="22222">
    <property type="hits" value="1 hit in 76 CRISPR screens"/>
</dbReference>
<dbReference type="ChiTaRS" id="Ubr1">
    <property type="organism name" value="mouse"/>
</dbReference>
<dbReference type="PRO" id="PR:O70481"/>
<dbReference type="Proteomes" id="UP000000589">
    <property type="component" value="Chromosome 2"/>
</dbReference>
<dbReference type="RNAct" id="O70481">
    <property type="molecule type" value="protein"/>
</dbReference>
<dbReference type="Bgee" id="ENSMUSG00000027272">
    <property type="expression patterns" value="Expressed in ascending aorta and 248 other cell types or tissues"/>
</dbReference>
<dbReference type="GO" id="GO:0005829">
    <property type="term" value="C:cytosol"/>
    <property type="evidence" value="ECO:0000250"/>
    <property type="project" value="UniProtKB"/>
</dbReference>
<dbReference type="GO" id="GO:0000502">
    <property type="term" value="C:proteasome complex"/>
    <property type="evidence" value="ECO:0000316"/>
    <property type="project" value="MGI"/>
</dbReference>
<dbReference type="GO" id="GO:0000151">
    <property type="term" value="C:ubiquitin ligase complex"/>
    <property type="evidence" value="ECO:0000316"/>
    <property type="project" value="MGI"/>
</dbReference>
<dbReference type="GO" id="GO:0070728">
    <property type="term" value="F:L-leucine binding"/>
    <property type="evidence" value="ECO:0007669"/>
    <property type="project" value="Ensembl"/>
</dbReference>
<dbReference type="GO" id="GO:0061630">
    <property type="term" value="F:ubiquitin protein ligase activity"/>
    <property type="evidence" value="ECO:0000314"/>
    <property type="project" value="UniProtKB"/>
</dbReference>
<dbReference type="GO" id="GO:0004842">
    <property type="term" value="F:ubiquitin-protein transferase activity"/>
    <property type="evidence" value="ECO:0000314"/>
    <property type="project" value="MGI"/>
</dbReference>
<dbReference type="GO" id="GO:0008270">
    <property type="term" value="F:zinc ion binding"/>
    <property type="evidence" value="ECO:0007669"/>
    <property type="project" value="UniProtKB-KW"/>
</dbReference>
<dbReference type="GO" id="GO:0071233">
    <property type="term" value="P:cellular response to L-leucine"/>
    <property type="evidence" value="ECO:0000250"/>
    <property type="project" value="UniProtKB"/>
</dbReference>
<dbReference type="GO" id="GO:0032007">
    <property type="term" value="P:negative regulation of TOR signaling"/>
    <property type="evidence" value="ECO:0000250"/>
    <property type="project" value="UniProtKB"/>
</dbReference>
<dbReference type="GO" id="GO:0016567">
    <property type="term" value="P:protein ubiquitination"/>
    <property type="evidence" value="ECO:0007669"/>
    <property type="project" value="UniProtKB-UniPathway"/>
</dbReference>
<dbReference type="GO" id="GO:0006511">
    <property type="term" value="P:ubiquitin-dependent protein catabolic process"/>
    <property type="evidence" value="ECO:0000314"/>
    <property type="project" value="MGI"/>
</dbReference>
<dbReference type="GO" id="GO:0071596">
    <property type="term" value="P:ubiquitin-dependent protein catabolic process via the N-end rule pathway"/>
    <property type="evidence" value="ECO:0000314"/>
    <property type="project" value="UniProtKB"/>
</dbReference>
<dbReference type="CDD" id="cd19678">
    <property type="entry name" value="UBR-box_UBR1"/>
    <property type="match status" value="1"/>
</dbReference>
<dbReference type="FunFam" id="3.30.1390.10:FF:000005">
    <property type="entry name" value="E3 ubiquitin-protein ligase UBR1 isoform X2"/>
    <property type="match status" value="1"/>
</dbReference>
<dbReference type="FunFam" id="2.10.110.30:FF:000001">
    <property type="entry name" value="E3 ubiquitin-protein ligase UBR2 isoform 1"/>
    <property type="match status" value="1"/>
</dbReference>
<dbReference type="Gene3D" id="2.10.110.30">
    <property type="match status" value="1"/>
</dbReference>
<dbReference type="Gene3D" id="3.30.1390.10">
    <property type="match status" value="1"/>
</dbReference>
<dbReference type="InterPro" id="IPR003769">
    <property type="entry name" value="ClpS_core"/>
</dbReference>
<dbReference type="InterPro" id="IPR044046">
    <property type="entry name" value="E3_ligase_UBR-like_C"/>
</dbReference>
<dbReference type="InterPro" id="IPR014719">
    <property type="entry name" value="Ribosomal_bL12_C/ClpS-like"/>
</dbReference>
<dbReference type="InterPro" id="IPR047507">
    <property type="entry name" value="UBR-box_UBR1"/>
</dbReference>
<dbReference type="InterPro" id="IPR039164">
    <property type="entry name" value="UBR1-like"/>
</dbReference>
<dbReference type="InterPro" id="IPR055194">
    <property type="entry name" value="UBR1-like_winged-helix"/>
</dbReference>
<dbReference type="InterPro" id="IPR036390">
    <property type="entry name" value="WH_DNA-bd_sf"/>
</dbReference>
<dbReference type="InterPro" id="IPR003126">
    <property type="entry name" value="Znf_UBR"/>
</dbReference>
<dbReference type="PANTHER" id="PTHR21497:SF27">
    <property type="entry name" value="E3 UBIQUITIN-PROTEIN LIGASE UBR1"/>
    <property type="match status" value="1"/>
</dbReference>
<dbReference type="PANTHER" id="PTHR21497">
    <property type="entry name" value="UBIQUITIN LIGASE E3 ALPHA-RELATED"/>
    <property type="match status" value="1"/>
</dbReference>
<dbReference type="Pfam" id="PF02617">
    <property type="entry name" value="ClpS"/>
    <property type="match status" value="1"/>
</dbReference>
<dbReference type="Pfam" id="PF18995">
    <property type="entry name" value="PRT6_C"/>
    <property type="match status" value="1"/>
</dbReference>
<dbReference type="Pfam" id="PF22960">
    <property type="entry name" value="UBR1-like_wing"/>
    <property type="match status" value="1"/>
</dbReference>
<dbReference type="Pfam" id="PF02207">
    <property type="entry name" value="zf-UBR"/>
    <property type="match status" value="1"/>
</dbReference>
<dbReference type="SMART" id="SM00396">
    <property type="entry name" value="ZnF_UBR1"/>
    <property type="match status" value="1"/>
</dbReference>
<dbReference type="SUPFAM" id="SSF54736">
    <property type="entry name" value="ClpS-like"/>
    <property type="match status" value="1"/>
</dbReference>
<dbReference type="SUPFAM" id="SSF46785">
    <property type="entry name" value="Winged helix' DNA-binding domain"/>
    <property type="match status" value="1"/>
</dbReference>
<dbReference type="PROSITE" id="PS51157">
    <property type="entry name" value="ZF_UBR"/>
    <property type="match status" value="1"/>
</dbReference>
<keyword id="KW-0007">Acetylation</keyword>
<keyword id="KW-0963">Cytoplasm</keyword>
<keyword id="KW-0479">Metal-binding</keyword>
<keyword id="KW-0597">Phosphoprotein</keyword>
<keyword id="KW-1185">Reference proteome</keyword>
<keyword id="KW-0808">Transferase</keyword>
<keyword id="KW-0833">Ubl conjugation pathway</keyword>
<keyword id="KW-0862">Zinc</keyword>
<keyword id="KW-0863">Zinc-finger</keyword>
<feature type="initiator methionine" description="Removed" evidence="2">
    <location>
        <position position="1"/>
    </location>
</feature>
<feature type="chain" id="PRO_0000056137" description="E3 ubiquitin-protein ligase UBR1">
    <location>
        <begin position="2"/>
        <end position="1757"/>
    </location>
</feature>
<feature type="zinc finger region" description="UBR-type" evidence="4">
    <location>
        <begin position="97"/>
        <end position="168"/>
    </location>
</feature>
<feature type="zinc finger region" description="RING-type; atypical">
    <location>
        <begin position="1101"/>
        <end position="1204"/>
    </location>
</feature>
<feature type="region of interest" description="Disordered" evidence="5">
    <location>
        <begin position="1"/>
        <end position="24"/>
    </location>
</feature>
<feature type="region of interest" description="Disordered" evidence="5">
    <location>
        <begin position="842"/>
        <end position="868"/>
    </location>
</feature>
<feature type="region of interest" description="UBC2-binding region (U2BR)" evidence="1">
    <location>
        <begin position="1022"/>
        <end position="1057"/>
    </location>
</feature>
<feature type="binding site" evidence="2">
    <location>
        <position position="99"/>
    </location>
    <ligand>
        <name>Zn(2+)</name>
        <dbReference type="ChEBI" id="CHEBI:29105"/>
        <label>1</label>
    </ligand>
</feature>
<feature type="binding site" evidence="1">
    <location>
        <position position="99"/>
    </location>
    <ligand>
        <name>Zn(2+)</name>
        <dbReference type="ChEBI" id="CHEBI:29105"/>
        <label>2</label>
    </ligand>
</feature>
<feature type="binding site" evidence="2">
    <location>
        <position position="112"/>
    </location>
    <ligand>
        <name>Zn(2+)</name>
        <dbReference type="ChEBI" id="CHEBI:29105"/>
        <label>2</label>
    </ligand>
</feature>
<feature type="binding site" evidence="1">
    <location>
        <position position="112"/>
    </location>
    <ligand>
        <name>Zn(2+)</name>
        <dbReference type="ChEBI" id="CHEBI:29105"/>
        <label>3</label>
    </ligand>
</feature>
<feature type="binding site" evidence="2">
    <location>
        <position position="115"/>
    </location>
    <ligand>
        <name>Zn(2+)</name>
        <dbReference type="ChEBI" id="CHEBI:29105"/>
        <label>2</label>
    </ligand>
</feature>
<feature type="binding site" evidence="1">
    <location>
        <position position="115"/>
    </location>
    <ligand>
        <name>Zn(2+)</name>
        <dbReference type="ChEBI" id="CHEBI:29105"/>
        <label>3</label>
    </ligand>
</feature>
<feature type="binding site" evidence="2">
    <location>
        <position position="124"/>
    </location>
    <ligand>
        <name>Zn(2+)</name>
        <dbReference type="ChEBI" id="CHEBI:29105"/>
        <label>1</label>
    </ligand>
</feature>
<feature type="binding site" evidence="1">
    <location>
        <position position="124"/>
    </location>
    <ligand>
        <name>Zn(2+)</name>
        <dbReference type="ChEBI" id="CHEBI:29105"/>
        <label>2</label>
    </ligand>
</feature>
<feature type="binding site" evidence="2">
    <location>
        <position position="127"/>
    </location>
    <ligand>
        <name>Zn(2+)</name>
        <dbReference type="ChEBI" id="CHEBI:29105"/>
        <label>1</label>
    </ligand>
</feature>
<feature type="binding site" evidence="1">
    <location>
        <position position="127"/>
    </location>
    <ligand>
        <name>Zn(2+)</name>
        <dbReference type="ChEBI" id="CHEBI:29105"/>
        <label>2</label>
    </ligand>
</feature>
<feature type="binding site" evidence="2">
    <location>
        <position position="127"/>
    </location>
    <ligand>
        <name>Zn(2+)</name>
        <dbReference type="ChEBI" id="CHEBI:29105"/>
        <label>3</label>
    </ligand>
</feature>
<feature type="binding site" evidence="2">
    <location>
        <position position="133"/>
    </location>
    <ligand>
        <name>Zn(2+)</name>
        <dbReference type="ChEBI" id="CHEBI:29105"/>
        <label>2</label>
    </ligand>
</feature>
<feature type="binding site" evidence="1">
    <location>
        <position position="133"/>
    </location>
    <ligand>
        <name>Zn(2+)</name>
        <dbReference type="ChEBI" id="CHEBI:29105"/>
        <label>3</label>
    </ligand>
</feature>
<feature type="binding site" evidence="2">
    <location>
        <position position="136"/>
    </location>
    <ligand>
        <name>Zn(2+)</name>
        <dbReference type="ChEBI" id="CHEBI:29105"/>
        <label>2</label>
    </ligand>
</feature>
<feature type="binding site" evidence="1">
    <location>
        <position position="136"/>
    </location>
    <ligand>
        <name>Zn(2+)</name>
        <dbReference type="ChEBI" id="CHEBI:29105"/>
        <label>3</label>
    </ligand>
</feature>
<feature type="binding site" evidence="3">
    <location>
        <position position="148"/>
    </location>
    <ligand>
        <name>a peptide</name>
        <dbReference type="ChEBI" id="CHEBI:60466"/>
    </ligand>
    <ligandPart>
        <name>L-arginine residue</name>
        <dbReference type="ChEBI" id="CHEBI:29965"/>
    </ligandPart>
</feature>
<feature type="binding site" evidence="2">
    <location>
        <position position="149"/>
    </location>
    <ligand>
        <name>Zn(2+)</name>
        <dbReference type="ChEBI" id="CHEBI:29105"/>
        <label>1</label>
    </ligand>
</feature>
<feature type="binding site" evidence="1">
    <location>
        <position position="149"/>
    </location>
    <ligand>
        <name>Zn(2+)</name>
        <dbReference type="ChEBI" id="CHEBI:29105"/>
        <label>2</label>
    </ligand>
</feature>
<feature type="binding site" evidence="3">
    <location>
        <position position="150"/>
    </location>
    <ligand>
        <name>a peptide</name>
        <dbReference type="ChEBI" id="CHEBI:60466"/>
    </ligand>
    <ligandPart>
        <name>L-arginine residue</name>
        <dbReference type="ChEBI" id="CHEBI:29965"/>
    </ligandPart>
</feature>
<feature type="binding site" evidence="1">
    <location>
        <position position="151"/>
    </location>
    <ligand>
        <name>Zn(2+)</name>
        <dbReference type="ChEBI" id="CHEBI:29105"/>
        <label>1</label>
    </ligand>
</feature>
<feature type="binding site" evidence="2">
    <location>
        <position position="151"/>
    </location>
    <ligand>
        <name>Zn(2+)</name>
        <dbReference type="ChEBI" id="CHEBI:29105"/>
        <label>3</label>
    </ligand>
</feature>
<feature type="binding site" evidence="3">
    <location>
        <position position="153"/>
    </location>
    <ligand>
        <name>a peptide</name>
        <dbReference type="ChEBI" id="CHEBI:60466"/>
    </ligand>
    <ligandPart>
        <name>L-arginine residue</name>
        <dbReference type="ChEBI" id="CHEBI:29965"/>
    </ligandPart>
</feature>
<feature type="binding site" evidence="1">
    <location>
        <position position="163"/>
    </location>
    <ligand>
        <name>Zn(2+)</name>
        <dbReference type="ChEBI" id="CHEBI:29105"/>
        <label>1</label>
    </ligand>
</feature>
<feature type="binding site" evidence="2">
    <location>
        <position position="163"/>
    </location>
    <ligand>
        <name>Zn(2+)</name>
        <dbReference type="ChEBI" id="CHEBI:29105"/>
        <label>3</label>
    </ligand>
</feature>
<feature type="binding site" evidence="2">
    <location>
        <position position="166"/>
    </location>
    <ligand>
        <name>Zn(2+)</name>
        <dbReference type="ChEBI" id="CHEBI:29105"/>
        <label>3</label>
    </ligand>
</feature>
<feature type="binding site" evidence="1">
    <location>
        <position position="1101"/>
    </location>
    <ligand>
        <name>Zn(2+)</name>
        <dbReference type="ChEBI" id="CHEBI:29105"/>
        <label>4</label>
    </ligand>
</feature>
<feature type="binding site" evidence="1">
    <location>
        <position position="1104"/>
    </location>
    <ligand>
        <name>Zn(2+)</name>
        <dbReference type="ChEBI" id="CHEBI:29105"/>
        <label>4</label>
    </ligand>
</feature>
<feature type="binding site" evidence="1">
    <location>
        <position position="1162"/>
    </location>
    <ligand>
        <name>Zn(2+)</name>
        <dbReference type="ChEBI" id="CHEBI:29105"/>
        <label>5</label>
    </ligand>
</feature>
<feature type="binding site" evidence="1">
    <location>
        <position position="1164"/>
    </location>
    <ligand>
        <name>Zn(2+)</name>
        <dbReference type="ChEBI" id="CHEBI:29105"/>
        <label>5</label>
    </ligand>
</feature>
<feature type="binding site" evidence="1">
    <location>
        <position position="1167"/>
    </location>
    <ligand>
        <name>Zn(2+)</name>
        <dbReference type="ChEBI" id="CHEBI:29105"/>
        <label>4</label>
    </ligand>
</feature>
<feature type="binding site" evidence="1">
    <location>
        <position position="1170"/>
    </location>
    <ligand>
        <name>Zn(2+)</name>
        <dbReference type="ChEBI" id="CHEBI:29105"/>
        <label>4</label>
    </ligand>
</feature>
<feature type="binding site" evidence="1">
    <location>
        <position position="1200"/>
    </location>
    <ligand>
        <name>Zn(2+)</name>
        <dbReference type="ChEBI" id="CHEBI:29105"/>
        <label>5</label>
    </ligand>
</feature>
<feature type="binding site" evidence="1">
    <location>
        <position position="1203"/>
    </location>
    <ligand>
        <name>Zn(2+)</name>
        <dbReference type="ChEBI" id="CHEBI:29105"/>
        <label>5</label>
    </ligand>
</feature>
<feature type="binding site" evidence="1">
    <location>
        <position position="1635"/>
    </location>
    <ligand>
        <name>Zn(2+)</name>
        <dbReference type="ChEBI" id="CHEBI:29105"/>
        <label>6</label>
    </ligand>
</feature>
<feature type="binding site" evidence="1">
    <location>
        <position position="1638"/>
    </location>
    <ligand>
        <name>Zn(2+)</name>
        <dbReference type="ChEBI" id="CHEBI:29105"/>
        <label>6</label>
    </ligand>
</feature>
<feature type="binding site" evidence="1">
    <location>
        <position position="1661"/>
    </location>
    <ligand>
        <name>Zn(2+)</name>
        <dbReference type="ChEBI" id="CHEBI:29105"/>
        <label>6</label>
    </ligand>
</feature>
<feature type="modified residue" description="N-acetylalanine" evidence="2">
    <location>
        <position position="2"/>
    </location>
</feature>
<feature type="modified residue" description="Phosphoserine" evidence="2">
    <location>
        <position position="1182"/>
    </location>
</feature>
<feature type="mutagenesis site" description="Group 4 mutant; no effect." evidence="11">
    <original>G</original>
    <variation>A</variation>
    <location>
        <position position="94"/>
    </location>
</feature>
<feature type="mutagenesis site" description="Group 1 mutant; abolished ability to degrade proteins with type-1 N-degrons without preventing degradation of proteins with type-2 N-degrons." evidence="11">
    <original>C</original>
    <variation>A</variation>
    <location>
        <position position="99"/>
    </location>
</feature>
<feature type="mutagenesis site" description="Group 2 mutant; abolished ability to degrade proteins with type-1 N-degrons without preventing degradation of proteins with type-2 N-degrons." evidence="11">
    <original>F</original>
    <variation>A</variation>
    <location>
        <position position="103"/>
    </location>
</feature>
<feature type="mutagenesis site" description="Group 1 mutant; abolished ability to degrade proteins with type-1 N-degrons without preventing degradation of proteins with type-2 N-degrons." evidence="11">
    <original>C</original>
    <variation>A</variation>
    <location>
        <position position="112"/>
    </location>
</feature>
<feature type="mutagenesis site" description="Group 1 mutant; abolished ability to degrade proteins with type-1 N-degrons without preventing degradation of proteins with type-2 N-degrons." evidence="11">
    <location>
        <position position="115"/>
    </location>
</feature>
<feature type="mutagenesis site" description="Group 2 mutant; abolished ability to degrade proteins with type-1 N-degrons without preventing degradation of proteins with type-2 N-degrons." evidence="11">
    <original>D</original>
    <variation>A</variation>
    <location>
        <position position="118"/>
    </location>
</feature>
<feature type="mutagenesis site" description="Group 1 mutant; abolished ability to degrade proteins with type-1 N-degrons without preventing degradation of proteins with type-2 N-degrons." evidence="11">
    <original>C</original>
    <variation>A</variation>
    <location>
        <position position="124"/>
    </location>
</feature>
<feature type="mutagenesis site" description="Group 1 mutant; abolished ability to degrade proteins with type-1 N-degrons without preventing degradation of proteins with type-2 N-degrons." evidence="11">
    <original>C</original>
    <variation>A</variation>
    <location>
        <position position="127"/>
    </location>
</feature>
<feature type="mutagenesis site" description="Group 1 mutant; abolished ability to degrade proteins with type-1 N-degrons without preventing degradation of proteins with type-2 N-degrons." evidence="11">
    <original>H</original>
    <variation>A</variation>
    <location>
        <position position="133"/>
    </location>
</feature>
<feature type="mutagenesis site" description="Group 1 mutant; abolished ability to degrade proteins with type-1 N-degrons without preventing degradation of proteins with type-2 N-degrons." evidence="11">
    <original>H</original>
    <variation>A</variation>
    <location>
        <position position="136"/>
    </location>
</feature>
<feature type="mutagenesis site" description="Group 2 mutant; abolished ability to degrade proteins with type-1 N-degrons without preventing degradation of proteins with type-2 N-degrons." evidence="11">
    <original>H</original>
    <variation>A</variation>
    <location>
        <position position="141"/>
    </location>
</feature>
<feature type="mutagenesis site" description="Group 2 mutant; abolished ability to degrade proteins with type-1 N-degrons without preventing degradation of proteins with type-2 N-degrons." evidence="11">
    <original>G</original>
    <variation>A</variation>
    <location>
        <position position="147"/>
    </location>
</feature>
<feature type="mutagenesis site" description="Group 1 mutant; abolished ability to degrade proteins with type-1 N-degrons without preventing degradation of proteins with type-2 N-degrons." evidence="11">
    <original>C</original>
    <variation>A</variation>
    <location>
        <position position="149"/>
    </location>
</feature>
<feature type="mutagenesis site" description="Group 1 mutant; abolished ability to degrade proteins with type-1 N-degrons without preventing degradation of proteins with type-2 N-degrons." evidence="11">
    <original>D</original>
    <variation>A</variation>
    <location>
        <position position="150"/>
    </location>
</feature>
<feature type="mutagenesis site" description="Group 1 mutant; abolished ability to degrade proteins with type-1 N-degrons without preventing degradation of proteins with type-2 N-degrons." evidence="11">
    <original>C</original>
    <variation>A</variation>
    <location>
        <position position="151"/>
    </location>
</feature>
<feature type="mutagenesis site" description="Group 2 mutant; abolished ability to degrade proteins with type-1 N-degrons without preventing degradation of proteins with type-2 N-degrons." evidence="11">
    <original>D</original>
    <variation>A</variation>
    <location>
        <position position="153"/>
    </location>
</feature>
<feature type="mutagenesis site" description="Group 2 mutant; abolished ability to degrade proteins with type-1 N-degrons without preventing degradation of proteins with type-2 N-degrons." evidence="11">
    <original>W</original>
    <variation>A</variation>
    <location>
        <position position="157"/>
    </location>
</feature>
<feature type="mutagenesis site" description="Group 1 mutant; abolished ability to degrade proteins with type-1 N-degrons without preventing degradation of proteins with type-2 N-degrons." evidence="11">
    <original>C</original>
    <variation>A</variation>
    <location>
        <position position="163"/>
    </location>
</feature>
<feature type="mutagenesis site" description="Group 4 mutant; abolished ability to degrade proteins with type-1 and type-2 N-degrons." evidence="11">
    <original>H</original>
    <variation>A</variation>
    <location>
        <position position="166"/>
    </location>
</feature>
<feature type="mutagenesis site" description="Group 3 mutant; abolished ability to degrade proteins with type-2 N-degrons without preventing degradation of proteins with type-1 N-degrons." evidence="11">
    <original>N</original>
    <variation>A</variation>
    <location>
        <position position="232"/>
    </location>
</feature>
<feature type="mutagenesis site" description="Group 3 mutant; abolished ability to degrade proteins with type-2 N-degrons without preventing degradation of proteins with type-1 N-degrons." evidence="11">
    <original>D</original>
    <variation>A</variation>
    <location>
        <position position="233"/>
    </location>
</feature>
<feature type="mutagenesis site" description="Group 3 mutant; abolished ability to degrade proteins with type-2 N-degrons without preventing degradation of proteins with type-1 N-degrons." evidence="11">
    <original>E</original>
    <variation>A</variation>
    <location>
        <position position="234"/>
    </location>
</feature>
<feature type="mutagenesis site" description="Group 3 mutant; abolished ability to degrade proteins with type-2 N-degrons without preventing degradation of proteins with type-1 N-degrons." evidence="11">
    <original>H</original>
    <variation>A</variation>
    <location>
        <position position="236"/>
    </location>
</feature>
<feature type="mutagenesis site" description="Group 3 mutant; abolished ability to degrade proteins with type-2 N-degrons without preventing degradation of proteins with type-1 N-degrons." evidence="11">
    <original>L</original>
    <variation>A</variation>
    <location>
        <position position="245"/>
    </location>
</feature>
<feature type="sequence conflict" description="In Ref. 1; AAC40165 and 3; BAC40933." evidence="14" ref="1 3">
    <original>G</original>
    <variation>S</variation>
    <location>
        <position position="639"/>
    </location>
</feature>
<feature type="sequence conflict" description="In Ref. 1; AAC40165." evidence="14" ref="1">
    <original>M</original>
    <variation>I</variation>
    <location>
        <position position="888"/>
    </location>
</feature>
<feature type="sequence conflict" description="In Ref. 1; AAC40165." evidence="14" ref="1">
    <original>M</original>
    <variation>T</variation>
    <location>
        <position position="901"/>
    </location>
</feature>
<feature type="sequence conflict" description="In Ref. 1; AAC40165." evidence="14" ref="1">
    <original>K</original>
    <variation>R</variation>
    <location>
        <position position="964"/>
    </location>
</feature>
<feature type="sequence conflict" description="In Ref. 1; AAC40165." evidence="14" ref="1">
    <original>S</original>
    <variation>G</variation>
    <location>
        <position position="973"/>
    </location>
</feature>
<feature type="sequence conflict" description="In Ref. 1; AAC40165." evidence="14" ref="1">
    <original>V</original>
    <variation>I</variation>
    <location>
        <position position="1008"/>
    </location>
</feature>
<feature type="sequence conflict" description="In Ref. 1; AAC40165." evidence="14" ref="1">
    <original>N</original>
    <variation>S</variation>
    <location>
        <position position="1357"/>
    </location>
</feature>
<feature type="sequence conflict" description="In Ref. 1; AAC40165." evidence="14" ref="1">
    <original>T</original>
    <variation>A</variation>
    <location>
        <position position="1371"/>
    </location>
</feature>
<feature type="sequence conflict" description="In Ref. 1; AAC40165." evidence="14" ref="1">
    <original>S</original>
    <variation>P</variation>
    <location>
        <position position="1464"/>
    </location>
</feature>
<feature type="sequence conflict" description="In Ref. 1; AAC40165." evidence="14" ref="1">
    <original>A</original>
    <variation>T</variation>
    <location>
        <position position="1496"/>
    </location>
</feature>
<sequence>MADEEMDGAERMDVSPEPPLAPQRPASWWDQQVDFYTAFLHHLAQLVPEIYFAEMDPDLEKQEESVQMSILTPLEWYLFGEDPDICLEKLKHSGAFQLCGKVFKSGETTYSCRDCAIDPTCVLCMDCFQSSVHKNHRYKMHTSTGGGFCDCGDTEAWKTGPFCVDHEPGRAGTTKESLHCPLNEEVIAQARRIFPSVIKYIVEMTIWEEEKELPPELQIREKNERYYCVLFNDEHHSYDHVIYSLQRALDCELAEAQLHTTAIDKEGRRAVKAGVYATCQEAKEDIKSHSENVSQHPLHVEVLHSVVMAHQKFALRLGSWMNKIMSYSSDFRQIFCQACLVEEPGSENPCLISRLMLWDAKLYKGARKILHELIFSSFFMEMEYKKLFAMEFVKYYKQLQKEYISDDHERSISITALSVQMLTVPTLARHLIEEQNVISVITETLLEVLPEYLDRNNKFNFQGYSQDKLGRVYAVICDLKYILISKPVIWTERLRAQFLEGFRSFLKILTCMQGMEEIRRQVGQHIEVDPDWEAAIAIQMQLKNILLMFQEWCACDEDLLLVAYKECHKAVMRCSTNFMSSTKTVVQLCGHSLETKSYKVSEDLVSIHLPLSRTLAGLHVRLSRLGAISRLHEFVPFDGFQVEVLVEYPLRCLVLVAQVVAEMWRRNGLSLISQVFYYQDVKCREEMYDKDIIMLQIGASIMDPNKFLLLVLQRYELTDAFNKTISTKDQDLIKQYNTLIEEMLQVLIYIVGERYVPGVGNVTREEVIMREITHLLCIEPMPHSAIARNLPENENNETGLENVINKVATFKKPGVSGHGVYELKDESLKDFNMYFYHYSKTQHSKAEHMQKKRRKQENKDEALPPPPPPEFCPAFSKVVNLLSCDVMMYILRTIFERAVDMESNLWTEGMLQMAFHILALGLLEEKQQLQKAPEEEVAFDFYHKASRLGSSAMNAQNIQMLLEKLKGIPQLESQKDMITWILQMFDTVKRLREKSCLVVATTSGLECVKSEEITHDKEKAERKRKAEAARLHRQKIMAQMSALQKNFIETHKLMYDNTSEVTGKEDSIMEEESTSAVSEASRIALGPKRGPAVTEKEVLTCILCQEEQEVKLENNAMVLSACVQKSTALTQHRGKPVDHLGETLDPLFMDPDLAHGTYTGSCGHVMHAVCWQKYFEAVQLSSQQRIHVDLFDLESGEYLCPLCKSLCNTVIPIIPLQPQKINSENAEALAQLLTLARWIQTVLARISGYNIKHAKGEAPAVPVLFNQGMGDSTFEFHSILSFGVQSSVKYSNSIKEMVILFATTIYRIGLKVPPDELDPRVPMMTWSTCAFTIQAIENLLGDEGKPLFGALQNRQHNGLKALMQFAVAQRTTCPQVLIHKHLARLLSVILPNLQSENTPGLLSVDLFHVLVGAVLAFPSLYWDDTVDLQPSPLSSSYNHLYLFHLITMAHMLQILLTTDTDLSSGPPLAEGEEDSEEARCASAFFVEVSQHTDGLAGCGAPGWYLWLSLRNGITPYLRCAALLFHYLLGVAPPEELFANSAEGEFSALCSYLSLPTNLFLLFQEYWDTIRPLLQRWCGDPALLKSLKQKSAVVRYPRKRNSLIELPEDYSCLLNQASHFRCPRSADDERKHPVLCLFCGAILCSQNICCQEIVNGEEVGACVFHALHCGAGVCIFLKIRECRVVLVEGKARGCAYPAPYLDEYGETDPGLKRGNPLHLSRERYRKLHLVWQQHCIIEEIARSQETNQMLFGFNWQLL</sequence>
<protein>
    <recommendedName>
        <fullName evidence="14">E3 ubiquitin-protein ligase UBR1</fullName>
        <ecNumber evidence="7 11">2.3.2.27</ecNumber>
    </recommendedName>
    <alternativeName>
        <fullName>N-recognin-1</fullName>
    </alternativeName>
    <alternativeName>
        <fullName>Ubiquitin-protein ligase E3-alpha-1</fullName>
    </alternativeName>
    <alternativeName>
        <fullName>Ubiquitin-protein ligase E3-alpha-I</fullName>
    </alternativeName>
</protein>
<accession>O70481</accession>
<accession>A2AQ54</accession>
<accession>Q5BKR8</accession>
<accession>Q792M3</accession>
<accession>Q8BN40</accession>
<accession>Q8C5K3</accession>
<comment type="function">
    <text evidence="2 6 7 9 11">E3 ubiquitin-protein ligase which is a component of the N-end rule pathway (PubMed:11689692, PubMed:14585983, PubMed:16311597, PubMed:19008229). Recognizes and binds proteins bearing specific N-terminal residues (N-degrons) that are destabilizing according to the N-end rule, leading to their ubiquitination and subsequent degradation (PubMed:11689692, PubMed:14585983, PubMed:16311597, PubMed:19008229). Recognizes both type-1 and type-2 N-degrons, containing positively charged amino acids (Arg, Lys and His) and bulky and hydrophobic amino acids, respectively (PubMed:19008229). Does not ubiquitinate proteins that are acetylated at the N-terminus (By similarity). In contrast, it strongly binds methylated N-degrons (By similarity). Binds leucine and is a negative regulator of the leucine-mTOR signaling pathway, thereby controlling cell growth (By similarity).</text>
</comment>
<comment type="catalytic activity">
    <reaction evidence="7 11">
        <text>S-ubiquitinyl-[E2 ubiquitin-conjugating enzyme]-L-cysteine + [acceptor protein]-L-lysine = [E2 ubiquitin-conjugating enzyme]-L-cysteine + N(6)-ubiquitinyl-[acceptor protein]-L-lysine.</text>
        <dbReference type="EC" id="2.3.2.27"/>
    </reaction>
</comment>
<comment type="pathway">
    <text evidence="7 11">Protein modification; protein ubiquitination.</text>
</comment>
<comment type="subunit">
    <text evidence="2">Interacts with RECQL4.</text>
</comment>
<comment type="subcellular location">
    <subcellularLocation>
        <location evidence="2">Cytoplasm</location>
        <location evidence="2">Cytosol</location>
    </subcellularLocation>
</comment>
<comment type="tissue specificity">
    <text evidence="6 7 8 9 12">Present in skeletal muscle and liver (at protein level). Broadly expressed, with highest levels in skeletal muscle and heart. Expressed in acinar cells of the pancreas. In testes, expressed primarily in spermatogonia.</text>
</comment>
<comment type="developmental stage">
    <text evidence="12">Expressed in limb buds at 9.5-11.5 dpc.</text>
</comment>
<comment type="induction">
    <text evidence="8">In models of cancer cachexia, induced in muscle during the progression of wasting.</text>
</comment>
<comment type="domain">
    <text evidence="2">The RING-H2 zinc finger is an atypical RING finger with a His ligand in place of the fourth Cys of the classical motif (By similarity). The UBR-type zinc finger forms a pocket that mediates recognition of type 1 N-degrons (By similarity). It exhibits preference for arginine in the first position (By similarity). It binds N-degrons with a methylated arginine in the first position (By similarity).</text>
</comment>
<comment type="disruption phenotype">
    <text evidence="9 10">Mice are viable and fertile, but show a decreased mass of skeletal muscle and adipose tissue. They have exocrine pancreatic insufficiency with impaired stimulus-secretion coupling and increased susceptibility to pancreatic injury. UBR1 and UBR2 double knockout embryos die at mid-gestation, with defects in neurogenesis and cardiovascular development. These defects included reduced proliferation as well as precocious migration and differentiation of neural progenitor cells.</text>
</comment>
<comment type="similarity">
    <text evidence="14">Belongs to the E3 ubiquitin-protein ligase UBR1-like family.</text>
</comment>
<comment type="sequence caution" evidence="14">
    <conflict type="miscellaneous discrepancy">
        <sequence resource="EMBL-CDS" id="AAH90969"/>
    </conflict>
    <text>Contaminating sequence. Potential poly-A sequence.</text>
</comment>
<evidence type="ECO:0000250" key="1">
    <source>
        <dbReference type="UniProtKB" id="P19812"/>
    </source>
</evidence>
<evidence type="ECO:0000250" key="2">
    <source>
        <dbReference type="UniProtKB" id="Q8IWV7"/>
    </source>
</evidence>
<evidence type="ECO:0000250" key="3">
    <source>
        <dbReference type="UniProtKB" id="Q8IWV8"/>
    </source>
</evidence>
<evidence type="ECO:0000255" key="4">
    <source>
        <dbReference type="PROSITE-ProRule" id="PRU00508"/>
    </source>
</evidence>
<evidence type="ECO:0000256" key="5">
    <source>
        <dbReference type="SAM" id="MobiDB-lite"/>
    </source>
</evidence>
<evidence type="ECO:0000269" key="6">
    <source>
    </source>
</evidence>
<evidence type="ECO:0000269" key="7">
    <source>
    </source>
</evidence>
<evidence type="ECO:0000269" key="8">
    <source>
    </source>
</evidence>
<evidence type="ECO:0000269" key="9">
    <source>
    </source>
</evidence>
<evidence type="ECO:0000269" key="10">
    <source>
    </source>
</evidence>
<evidence type="ECO:0000269" key="11">
    <source>
    </source>
</evidence>
<evidence type="ECO:0000269" key="12">
    <source>
    </source>
</evidence>
<evidence type="ECO:0000303" key="13">
    <source>
    </source>
</evidence>
<evidence type="ECO:0000305" key="14"/>
<evidence type="ECO:0000312" key="15">
    <source>
        <dbReference type="MGI" id="MGI:1277977"/>
    </source>
</evidence>
<name>UBR1_MOUSE</name>
<proteinExistence type="evidence at protein level"/>
<reference key="1">
    <citation type="journal article" date="1998" name="Proc. Natl. Acad. Sci. U.S.A.">
        <title>The mouse and human genes encoding the recognition component of the N-end rule pathway.</title>
        <authorList>
            <person name="Kwon Y.T."/>
            <person name="Reiss Y."/>
            <person name="Fried V.A."/>
            <person name="Hershko A."/>
            <person name="Yoon J.K."/>
            <person name="Gonda D.K."/>
            <person name="Sangan P."/>
            <person name="Copeland N.G."/>
            <person name="Jenkins N.A."/>
            <person name="Varshavsky A."/>
        </authorList>
    </citation>
    <scope>NUCLEOTIDE SEQUENCE [GENOMIC DNA / MRNA]</scope>
    <scope>TISSUE SPECIFICITY</scope>
    <scope>DEVELOPMENTAL STAGE</scope>
    <source>
        <strain>129/SvJ</strain>
    </source>
</reference>
<reference key="2">
    <citation type="journal article" date="2009" name="PLoS Biol.">
        <title>Lineage-specific biology revealed by a finished genome assembly of the mouse.</title>
        <authorList>
            <person name="Church D.M."/>
            <person name="Goodstadt L."/>
            <person name="Hillier L.W."/>
            <person name="Zody M.C."/>
            <person name="Goldstein S."/>
            <person name="She X."/>
            <person name="Bult C.J."/>
            <person name="Agarwala R."/>
            <person name="Cherry J.L."/>
            <person name="DiCuccio M."/>
            <person name="Hlavina W."/>
            <person name="Kapustin Y."/>
            <person name="Meric P."/>
            <person name="Maglott D."/>
            <person name="Birtle Z."/>
            <person name="Marques A.C."/>
            <person name="Graves T."/>
            <person name="Zhou S."/>
            <person name="Teague B."/>
            <person name="Potamousis K."/>
            <person name="Churas C."/>
            <person name="Place M."/>
            <person name="Herschleb J."/>
            <person name="Runnheim R."/>
            <person name="Forrest D."/>
            <person name="Amos-Landgraf J."/>
            <person name="Schwartz D.C."/>
            <person name="Cheng Z."/>
            <person name="Lindblad-Toh K."/>
            <person name="Eichler E.E."/>
            <person name="Ponting C.P."/>
        </authorList>
    </citation>
    <scope>NUCLEOTIDE SEQUENCE [LARGE SCALE GENOMIC DNA]</scope>
    <source>
        <strain>C57BL/6J</strain>
    </source>
</reference>
<reference key="3">
    <citation type="journal article" date="2005" name="Science">
        <title>The transcriptional landscape of the mammalian genome.</title>
        <authorList>
            <person name="Carninci P."/>
            <person name="Kasukawa T."/>
            <person name="Katayama S."/>
            <person name="Gough J."/>
            <person name="Frith M.C."/>
            <person name="Maeda N."/>
            <person name="Oyama R."/>
            <person name="Ravasi T."/>
            <person name="Lenhard B."/>
            <person name="Wells C."/>
            <person name="Kodzius R."/>
            <person name="Shimokawa K."/>
            <person name="Bajic V.B."/>
            <person name="Brenner S.E."/>
            <person name="Batalov S."/>
            <person name="Forrest A.R."/>
            <person name="Zavolan M."/>
            <person name="Davis M.J."/>
            <person name="Wilming L.G."/>
            <person name="Aidinis V."/>
            <person name="Allen J.E."/>
            <person name="Ambesi-Impiombato A."/>
            <person name="Apweiler R."/>
            <person name="Aturaliya R.N."/>
            <person name="Bailey T.L."/>
            <person name="Bansal M."/>
            <person name="Baxter L."/>
            <person name="Beisel K.W."/>
            <person name="Bersano T."/>
            <person name="Bono H."/>
            <person name="Chalk A.M."/>
            <person name="Chiu K.P."/>
            <person name="Choudhary V."/>
            <person name="Christoffels A."/>
            <person name="Clutterbuck D.R."/>
            <person name="Crowe M.L."/>
            <person name="Dalla E."/>
            <person name="Dalrymple B.P."/>
            <person name="de Bono B."/>
            <person name="Della Gatta G."/>
            <person name="di Bernardo D."/>
            <person name="Down T."/>
            <person name="Engstrom P."/>
            <person name="Fagiolini M."/>
            <person name="Faulkner G."/>
            <person name="Fletcher C.F."/>
            <person name="Fukushima T."/>
            <person name="Furuno M."/>
            <person name="Futaki S."/>
            <person name="Gariboldi M."/>
            <person name="Georgii-Hemming P."/>
            <person name="Gingeras T.R."/>
            <person name="Gojobori T."/>
            <person name="Green R.E."/>
            <person name="Gustincich S."/>
            <person name="Harbers M."/>
            <person name="Hayashi Y."/>
            <person name="Hensch T.K."/>
            <person name="Hirokawa N."/>
            <person name="Hill D."/>
            <person name="Huminiecki L."/>
            <person name="Iacono M."/>
            <person name="Ikeo K."/>
            <person name="Iwama A."/>
            <person name="Ishikawa T."/>
            <person name="Jakt M."/>
            <person name="Kanapin A."/>
            <person name="Katoh M."/>
            <person name="Kawasawa Y."/>
            <person name="Kelso J."/>
            <person name="Kitamura H."/>
            <person name="Kitano H."/>
            <person name="Kollias G."/>
            <person name="Krishnan S.P."/>
            <person name="Kruger A."/>
            <person name="Kummerfeld S.K."/>
            <person name="Kurochkin I.V."/>
            <person name="Lareau L.F."/>
            <person name="Lazarevic D."/>
            <person name="Lipovich L."/>
            <person name="Liu J."/>
            <person name="Liuni S."/>
            <person name="McWilliam S."/>
            <person name="Madan Babu M."/>
            <person name="Madera M."/>
            <person name="Marchionni L."/>
            <person name="Matsuda H."/>
            <person name="Matsuzawa S."/>
            <person name="Miki H."/>
            <person name="Mignone F."/>
            <person name="Miyake S."/>
            <person name="Morris K."/>
            <person name="Mottagui-Tabar S."/>
            <person name="Mulder N."/>
            <person name="Nakano N."/>
            <person name="Nakauchi H."/>
            <person name="Ng P."/>
            <person name="Nilsson R."/>
            <person name="Nishiguchi S."/>
            <person name="Nishikawa S."/>
            <person name="Nori F."/>
            <person name="Ohara O."/>
            <person name="Okazaki Y."/>
            <person name="Orlando V."/>
            <person name="Pang K.C."/>
            <person name="Pavan W.J."/>
            <person name="Pavesi G."/>
            <person name="Pesole G."/>
            <person name="Petrovsky N."/>
            <person name="Piazza S."/>
            <person name="Reed J."/>
            <person name="Reid J.F."/>
            <person name="Ring B.Z."/>
            <person name="Ringwald M."/>
            <person name="Rost B."/>
            <person name="Ruan Y."/>
            <person name="Salzberg S.L."/>
            <person name="Sandelin A."/>
            <person name="Schneider C."/>
            <person name="Schoenbach C."/>
            <person name="Sekiguchi K."/>
            <person name="Semple C.A."/>
            <person name="Seno S."/>
            <person name="Sessa L."/>
            <person name="Sheng Y."/>
            <person name="Shibata Y."/>
            <person name="Shimada H."/>
            <person name="Shimada K."/>
            <person name="Silva D."/>
            <person name="Sinclair B."/>
            <person name="Sperling S."/>
            <person name="Stupka E."/>
            <person name="Sugiura K."/>
            <person name="Sultana R."/>
            <person name="Takenaka Y."/>
            <person name="Taki K."/>
            <person name="Tammoja K."/>
            <person name="Tan S.L."/>
            <person name="Tang S."/>
            <person name="Taylor M.S."/>
            <person name="Tegner J."/>
            <person name="Teichmann S.A."/>
            <person name="Ueda H.R."/>
            <person name="van Nimwegen E."/>
            <person name="Verardo R."/>
            <person name="Wei C.L."/>
            <person name="Yagi K."/>
            <person name="Yamanishi H."/>
            <person name="Zabarovsky E."/>
            <person name="Zhu S."/>
            <person name="Zimmer A."/>
            <person name="Hide W."/>
            <person name="Bult C."/>
            <person name="Grimmond S.M."/>
            <person name="Teasdale R.D."/>
            <person name="Liu E.T."/>
            <person name="Brusic V."/>
            <person name="Quackenbush J."/>
            <person name="Wahlestedt C."/>
            <person name="Mattick J.S."/>
            <person name="Hume D.A."/>
            <person name="Kai C."/>
            <person name="Sasaki D."/>
            <person name="Tomaru Y."/>
            <person name="Fukuda S."/>
            <person name="Kanamori-Katayama M."/>
            <person name="Suzuki M."/>
            <person name="Aoki J."/>
            <person name="Arakawa T."/>
            <person name="Iida J."/>
            <person name="Imamura K."/>
            <person name="Itoh M."/>
            <person name="Kato T."/>
            <person name="Kawaji H."/>
            <person name="Kawagashira N."/>
            <person name="Kawashima T."/>
            <person name="Kojima M."/>
            <person name="Kondo S."/>
            <person name="Konno H."/>
            <person name="Nakano K."/>
            <person name="Ninomiya N."/>
            <person name="Nishio T."/>
            <person name="Okada M."/>
            <person name="Plessy C."/>
            <person name="Shibata K."/>
            <person name="Shiraki T."/>
            <person name="Suzuki S."/>
            <person name="Tagami M."/>
            <person name="Waki K."/>
            <person name="Watahiki A."/>
            <person name="Okamura-Oho Y."/>
            <person name="Suzuki H."/>
            <person name="Kawai J."/>
            <person name="Hayashizaki Y."/>
        </authorList>
    </citation>
    <scope>NUCLEOTIDE SEQUENCE [LARGE SCALE MRNA] OF 1-849 AND 1529-1757</scope>
    <source>
        <strain>NOD</strain>
        <tissue>Olfactory bulb</tissue>
        <tissue>Spleen</tissue>
    </source>
</reference>
<reference key="4">
    <citation type="journal article" date="2004" name="Genome Res.">
        <title>The status, quality, and expansion of the NIH full-length cDNA project: the Mammalian Gene Collection (MGC).</title>
        <authorList>
            <consortium name="The MGC Project Team"/>
        </authorList>
    </citation>
    <scope>NUCLEOTIDE SEQUENCE [LARGE SCALE MRNA] OF 1-852</scope>
    <source>
        <strain>C57BL/6J</strain>
        <tissue>Brain</tissue>
    </source>
</reference>
<reference key="5">
    <citation type="journal article" date="2001" name="Mol. Cell. Biol.">
        <title>Construction and analysis of mouse strains lacking the ubiquitin ligase UBR1 (E3alpha) of the N-end rule pathway.</title>
        <authorList>
            <person name="Kwon Y.T."/>
            <person name="Xia Z."/>
            <person name="Davydov I.V."/>
            <person name="Lecker S.H."/>
            <person name="Varshavsky A."/>
        </authorList>
    </citation>
    <scope>TISSUE SPECIFICITY</scope>
    <scope>FUNCTION</scope>
</reference>
<reference key="6">
    <citation type="journal article" date="2003" name="Mol. Cell. Biol.">
        <title>Female lethality and apoptosis of spermatocytes in mice lacking the UBR2 ubiquitin ligase of the N-end rule pathway.</title>
        <authorList>
            <person name="Kwon Y.T."/>
            <person name="Xia Z."/>
            <person name="An J.Y."/>
            <person name="Tasaki T."/>
            <person name="Davydov I.V."/>
            <person name="Seo J.W."/>
            <person name="Sheng J."/>
            <person name="Xie Y."/>
            <person name="Varshavsky A."/>
        </authorList>
    </citation>
    <scope>TISSUE SPECIFICITY</scope>
    <scope>FUNCTION</scope>
    <scope>CATALYTIC ACTIVITY</scope>
    <scope>PATHWAY</scope>
</reference>
<reference key="7">
    <citation type="journal article" date="2004" name="Cancer Res.">
        <title>Regulation of protein catabolism by muscle-specific and cytokine-inducible ubiquitin ligase E3alpha-II during cancer cachexia.</title>
        <authorList>
            <person name="Kwak K.S."/>
            <person name="Zhou X."/>
            <person name="Solomon V."/>
            <person name="Baracos V.E."/>
            <person name="Davis J."/>
            <person name="Bannon A.W."/>
            <person name="Boyle W.J."/>
            <person name="Lacey D.L."/>
            <person name="Han H.Q."/>
        </authorList>
    </citation>
    <scope>TISSUE SPECIFICITY</scope>
    <scope>INDUCTION</scope>
</reference>
<reference key="8">
    <citation type="journal article" date="2005" name="Nat. Genet.">
        <title>Deficiency of UBR1, a ubiquitin ligase of the N-end rule pathway, causes pancreatic dysfunction, malformations and mental retardation (Johanson-Blizzard syndrome).</title>
        <authorList>
            <person name="Zenker M."/>
            <person name="Mayerle J."/>
            <person name="Lerch M.M."/>
            <person name="Tagariello A."/>
            <person name="Zerres K."/>
            <person name="Durie P.R."/>
            <person name="Beier M."/>
            <person name="Hulskamp G."/>
            <person name="Guzman C."/>
            <person name="Rehder H."/>
            <person name="Beemer F.A."/>
            <person name="Hamel B.C.J."/>
            <person name="Vanlieferinghen P."/>
            <person name="Gershoni-Baruch R."/>
            <person name="Vieira M.W."/>
            <person name="Dumic M."/>
            <person name="Auslender R."/>
            <person name="Gil-da-Silva-Lopes V.L."/>
            <person name="Steinlicht S."/>
            <person name="Rauh M."/>
            <person name="Shalev S.A."/>
            <person name="Thiel C."/>
            <person name="Winterpacht A."/>
            <person name="Kwon Y.T."/>
            <person name="Varshavsky A."/>
            <person name="Reis A."/>
        </authorList>
    </citation>
    <scope>FUNCTION</scope>
    <scope>TISSUE SPECIFICITY</scope>
    <scope>DISRUPTION PHENOTYPE</scope>
</reference>
<reference key="9">
    <citation type="journal article" date="2006" name="Proc. Natl. Acad. Sci. U.S.A.">
        <title>Impaired neurogenesis and cardiovascular development in mice lacking the E3 ubiquitin ligases UBR1 and UBR2 of the N-end rule pathway.</title>
        <authorList>
            <person name="An J.Y."/>
            <person name="Seo J.W."/>
            <person name="Tasaki T."/>
            <person name="Lee M.J."/>
            <person name="Varshavsky A."/>
            <person name="Kwon Y.T."/>
        </authorList>
    </citation>
    <scope>DISRUPTION PHENOTYPE</scope>
</reference>
<reference key="10">
    <citation type="journal article" date="2009" name="J. Biol. Chem.">
        <title>The substrate recognition domains of the N-end rule pathway.</title>
        <authorList>
            <person name="Tasaki T."/>
            <person name="Zakrzewska A."/>
            <person name="Dudgeon D.D."/>
            <person name="Jiang Y."/>
            <person name="Lazo J.S."/>
            <person name="Kwon Y.T."/>
        </authorList>
    </citation>
    <scope>FUNCTION</scope>
    <scope>CATALYTIC ACTIVITY</scope>
    <scope>PATHWAY</scope>
    <scope>DOMAIN</scope>
    <scope>MUTAGENESIS OF GLY-94; CYS-99; PHE-103; CYS-112; CYS-115; ASP-118; CYS-124; CYS-127; HIS-133; HIS-136; HIS-141; GLY-147; CYS-149; ASP-150; CYS-151; ASP-153; TRP-157; CYS-163; HIS-166; ASN-232; ASP-233; GLU-234; HIS-236 AND LEU-245</scope>
</reference>
<reference key="11">
    <citation type="journal article" date="2010" name="Cell">
        <title>A tissue-specific atlas of mouse protein phosphorylation and expression.</title>
        <authorList>
            <person name="Huttlin E.L."/>
            <person name="Jedrychowski M.P."/>
            <person name="Elias J.E."/>
            <person name="Goswami T."/>
            <person name="Rad R."/>
            <person name="Beausoleil S.A."/>
            <person name="Villen J."/>
            <person name="Haas W."/>
            <person name="Sowa M.E."/>
            <person name="Gygi S.P."/>
        </authorList>
    </citation>
    <scope>IDENTIFICATION BY MASS SPECTROMETRY [LARGE SCALE ANALYSIS]</scope>
    <source>
        <tissue>Brain</tissue>
        <tissue>Brown adipose tissue</tissue>
        <tissue>Heart</tissue>
        <tissue>Kidney</tissue>
        <tissue>Lung</tissue>
        <tissue>Pancreas</tissue>
        <tissue>Spleen</tissue>
        <tissue>Testis</tissue>
    </source>
</reference>
<gene>
    <name evidence="13 15" type="primary">Ubr1</name>
</gene>
<organism>
    <name type="scientific">Mus musculus</name>
    <name type="common">Mouse</name>
    <dbReference type="NCBI Taxonomy" id="10090"/>
    <lineage>
        <taxon>Eukaryota</taxon>
        <taxon>Metazoa</taxon>
        <taxon>Chordata</taxon>
        <taxon>Craniata</taxon>
        <taxon>Vertebrata</taxon>
        <taxon>Euteleostomi</taxon>
        <taxon>Mammalia</taxon>
        <taxon>Eutheria</taxon>
        <taxon>Euarchontoglires</taxon>
        <taxon>Glires</taxon>
        <taxon>Rodentia</taxon>
        <taxon>Myomorpha</taxon>
        <taxon>Muroidea</taxon>
        <taxon>Muridae</taxon>
        <taxon>Murinae</taxon>
        <taxon>Mus</taxon>
        <taxon>Mus</taxon>
    </lineage>
</organism>